<comment type="function">
    <text>Mitochondrial membrane ATP synthase (F(1)F(0) ATP synthase or Complex V) produces ATP from ADP in the presence of a proton gradient across the membrane which is generated by electron transport complexes of the respiratory chain. F-type ATPases consist of two structural domains, F(1) - containing the extramembraneous catalytic core and F(0) - containing the membrane proton channel, linked together by a central stalk and a peripheral stalk. During catalysis, ATP synthesis in the catalytic domain of F(1) is coupled via a rotary mechanism of the central stalk subunits to proton translocation. Key component of the proton channel; it may play a direct role in the translocation of protons across the membrane.</text>
</comment>
<comment type="subunit">
    <text>F-type ATPases have 2 components, CF(1) - the catalytic core - and CF(0) - the membrane proton channel. CF(1) has five subunits: alpha(3), beta(3), gamma(1), delta(1), epsilon(1). CF(0) has three main subunits: a, b and c.</text>
</comment>
<comment type="subcellular location">
    <subcellularLocation>
        <location>Mitochondrion inner membrane</location>
        <topology>Multi-pass membrane protein</topology>
    </subcellularLocation>
</comment>
<comment type="similarity">
    <text evidence="2">Belongs to the ATPase A chain family.</text>
</comment>
<name>ATP6_DROSI</name>
<feature type="chain" id="PRO_0000082117" description="ATP synthase subunit a">
    <location>
        <begin position="1"/>
        <end position="224"/>
    </location>
</feature>
<feature type="transmembrane region" description="Helical" evidence="1">
    <location>
        <begin position="17"/>
        <end position="37"/>
    </location>
</feature>
<feature type="transmembrane region" description="Helical" evidence="1">
    <location>
        <begin position="72"/>
        <end position="92"/>
    </location>
</feature>
<feature type="transmembrane region" description="Helical" evidence="1">
    <location>
        <begin position="99"/>
        <end position="119"/>
    </location>
</feature>
<feature type="transmembrane region" description="Helical" evidence="1">
    <location>
        <begin position="125"/>
        <end position="145"/>
    </location>
</feature>
<feature type="transmembrane region" description="Helical" evidence="1">
    <location>
        <begin position="170"/>
        <end position="190"/>
    </location>
</feature>
<feature type="transmembrane region" description="Helical" evidence="1">
    <location>
        <begin position="195"/>
        <end position="215"/>
    </location>
</feature>
<feature type="sequence variant" description="In strain: HW00, HW09, NC37, NC48, TT00 and TT01.">
    <original>L</original>
    <variation>I</variation>
    <location>
        <position position="28"/>
    </location>
</feature>
<feature type="sequence variant" description="In strain: HW00, HW09, NC37, NC48, TT00 and TT01.">
    <original>L</original>
    <variation>M</variation>
    <location>
        <position position="115"/>
    </location>
</feature>
<feature type="sequence variant" description="In strain: C167.">
    <original>I</original>
    <variation>F</variation>
    <location>
        <position position="119"/>
    </location>
</feature>
<feature type="sequence variant" description="In strain: HW00, HW09, NC37, NC48, TT00 and TT01.">
    <original>I</original>
    <variation>V</variation>
    <location>
        <position position="137"/>
    </location>
</feature>
<feature type="sequence variant" description="In strain: HW09.">
    <original>V</original>
    <variation>I</variation>
    <location>
        <position position="187"/>
    </location>
</feature>
<sequence length="224" mass="25065">MMTNLFSVFDPSAIFNLSLNWLSTFLGLLMIPSIYWLMPSRYNIVWNSILLTLHKEFKTLLGPSGHNGSTFIFISLFSLILFNNFMGLFPYIFTSTSHLTLTLSLALPLWLCFMLYGWINHTQHMFAHLVPQGTPAILMPFMVCIETISNIIRPGTLAVRLTANMIAGHLLLTLLGNTGPSMSYLLVTFLLTAQIALLVLESAVAMIQSYVFAVLSTLYSSEVN</sequence>
<proteinExistence type="inferred from homology"/>
<geneLocation type="mitochondrion"/>
<keyword id="KW-0066">ATP synthesis</keyword>
<keyword id="KW-0138">CF(0)</keyword>
<keyword id="KW-0375">Hydrogen ion transport</keyword>
<keyword id="KW-0406">Ion transport</keyword>
<keyword id="KW-0472">Membrane</keyword>
<keyword id="KW-0496">Mitochondrion</keyword>
<keyword id="KW-0999">Mitochondrion inner membrane</keyword>
<keyword id="KW-1185">Reference proteome</keyword>
<keyword id="KW-0812">Transmembrane</keyword>
<keyword id="KW-1133">Transmembrane helix</keyword>
<keyword id="KW-0813">Transport</keyword>
<organism>
    <name type="scientific">Drosophila simulans</name>
    <name type="common">Fruit fly</name>
    <dbReference type="NCBI Taxonomy" id="7240"/>
    <lineage>
        <taxon>Eukaryota</taxon>
        <taxon>Metazoa</taxon>
        <taxon>Ecdysozoa</taxon>
        <taxon>Arthropoda</taxon>
        <taxon>Hexapoda</taxon>
        <taxon>Insecta</taxon>
        <taxon>Pterygota</taxon>
        <taxon>Neoptera</taxon>
        <taxon>Endopterygota</taxon>
        <taxon>Diptera</taxon>
        <taxon>Brachycera</taxon>
        <taxon>Muscomorpha</taxon>
        <taxon>Ephydroidea</taxon>
        <taxon>Drosophilidae</taxon>
        <taxon>Drosophila</taxon>
        <taxon>Sophophora</taxon>
    </lineage>
</organism>
<protein>
    <recommendedName>
        <fullName>ATP synthase subunit a</fullName>
    </recommendedName>
    <alternativeName>
        <fullName>F-ATPase protein 6</fullName>
    </alternativeName>
</protein>
<dbReference type="EMBL" id="AY518670">
    <property type="protein sequence ID" value="AAR91396.1"/>
    <property type="molecule type" value="Genomic_DNA"/>
</dbReference>
<dbReference type="EMBL" id="AY518671">
    <property type="protein sequence ID" value="AAR91405.1"/>
    <property type="molecule type" value="Genomic_DNA"/>
</dbReference>
<dbReference type="EMBL" id="AY518672">
    <property type="protein sequence ID" value="AAR91418.1"/>
    <property type="molecule type" value="Genomic_DNA"/>
</dbReference>
<dbReference type="EMBL" id="AY518673">
    <property type="protein sequence ID" value="AAR91431.1"/>
    <property type="molecule type" value="Genomic_DNA"/>
</dbReference>
<dbReference type="EMBL" id="AY518674">
    <property type="protein sequence ID" value="AAR91444.1"/>
    <property type="molecule type" value="Genomic_DNA"/>
</dbReference>
<dbReference type="EMBL" id="AF200833">
    <property type="protein sequence ID" value="AAF77293.1"/>
    <property type="molecule type" value="Genomic_DNA"/>
</dbReference>
<dbReference type="EMBL" id="AF200834">
    <property type="protein sequence ID" value="AAF77307.1"/>
    <property type="molecule type" value="Genomic_DNA"/>
</dbReference>
<dbReference type="EMBL" id="AF200835">
    <property type="protein sequence ID" value="AAF77320.1"/>
    <property type="molecule type" value="Genomic_DNA"/>
</dbReference>
<dbReference type="EMBL" id="AF200836">
    <property type="protein sequence ID" value="AAF77333.1"/>
    <property type="molecule type" value="Genomic_DNA"/>
</dbReference>
<dbReference type="EMBL" id="AF200837">
    <property type="protein sequence ID" value="AAF77346.1"/>
    <property type="molecule type" value="Genomic_DNA"/>
</dbReference>
<dbReference type="EMBL" id="AF200838">
    <property type="protein sequence ID" value="AAF77359.1"/>
    <property type="molecule type" value="Genomic_DNA"/>
</dbReference>
<dbReference type="EMBL" id="AF200839">
    <property type="protein sequence ID" value="AAF77373.1"/>
    <property type="molecule type" value="Genomic_DNA"/>
</dbReference>
<dbReference type="EMBL" id="AF200840">
    <property type="protein sequence ID" value="AAF77385.1"/>
    <property type="molecule type" value="Genomic_DNA"/>
</dbReference>
<dbReference type="EMBL" id="AF200841">
    <property type="protein sequence ID" value="AAF77398.1"/>
    <property type="molecule type" value="Genomic_DNA"/>
</dbReference>
<dbReference type="EMBL" id="AF200842">
    <property type="protein sequence ID" value="AAF77410.1"/>
    <property type="molecule type" value="Genomic_DNA"/>
</dbReference>
<dbReference type="EMBL" id="AF200843">
    <property type="protein sequence ID" value="AAF77424.1"/>
    <property type="molecule type" value="Genomic_DNA"/>
</dbReference>
<dbReference type="EMBL" id="AF200844">
    <property type="protein sequence ID" value="AAF77437.1"/>
    <property type="molecule type" value="Genomic_DNA"/>
</dbReference>
<dbReference type="EMBL" id="AF200845">
    <property type="protein sequence ID" value="AAF77450.1"/>
    <property type="molecule type" value="Genomic_DNA"/>
</dbReference>
<dbReference type="EMBL" id="AF200846">
    <property type="protein sequence ID" value="AAF77463.1"/>
    <property type="molecule type" value="Genomic_DNA"/>
</dbReference>
<dbReference type="EMBL" id="AF200847">
    <property type="protein sequence ID" value="AAF77476.1"/>
    <property type="molecule type" value="Genomic_DNA"/>
</dbReference>
<dbReference type="EMBL" id="AF200848">
    <property type="protein sequence ID" value="AAF77489.1"/>
    <property type="molecule type" value="Genomic_DNA"/>
</dbReference>
<dbReference type="EMBL" id="AF200849">
    <property type="protein sequence ID" value="AAF77503.1"/>
    <property type="molecule type" value="Genomic_DNA"/>
</dbReference>
<dbReference type="EMBL" id="AF200850">
    <property type="protein sequence ID" value="AAF77515.1"/>
    <property type="molecule type" value="Genomic_DNA"/>
</dbReference>
<dbReference type="EMBL" id="AF200851">
    <property type="protein sequence ID" value="AAF77529.1"/>
    <property type="molecule type" value="Genomic_DNA"/>
</dbReference>
<dbReference type="EMBL" id="AF200852">
    <property type="protein sequence ID" value="AAF77541.1"/>
    <property type="molecule type" value="Genomic_DNA"/>
</dbReference>
<dbReference type="EMBL" id="AF200853">
    <property type="protein sequence ID" value="AAF77554.1"/>
    <property type="molecule type" value="Genomic_DNA"/>
</dbReference>
<dbReference type="EMBL" id="AF200854">
    <property type="protein sequence ID" value="AAF77567.1"/>
    <property type="molecule type" value="Genomic_DNA"/>
</dbReference>
<dbReference type="RefSeq" id="NP_982326.1">
    <property type="nucleotide sequence ID" value="NC_005781.1"/>
</dbReference>
<dbReference type="SMR" id="P50269"/>
<dbReference type="STRING" id="7240.P50269"/>
<dbReference type="GeneID" id="2760957"/>
<dbReference type="KEGG" id="dsi:ATP6"/>
<dbReference type="CTD" id="4508"/>
<dbReference type="Proteomes" id="UP000000304">
    <property type="component" value="Mitochondrion"/>
</dbReference>
<dbReference type="GO" id="GO:0005743">
    <property type="term" value="C:mitochondrial inner membrane"/>
    <property type="evidence" value="ECO:0007669"/>
    <property type="project" value="UniProtKB-SubCell"/>
</dbReference>
<dbReference type="GO" id="GO:0045259">
    <property type="term" value="C:proton-transporting ATP synthase complex"/>
    <property type="evidence" value="ECO:0007669"/>
    <property type="project" value="UniProtKB-KW"/>
</dbReference>
<dbReference type="GO" id="GO:0046933">
    <property type="term" value="F:proton-transporting ATP synthase activity, rotational mechanism"/>
    <property type="evidence" value="ECO:0007669"/>
    <property type="project" value="TreeGrafter"/>
</dbReference>
<dbReference type="CDD" id="cd00310">
    <property type="entry name" value="ATP-synt_Fo_a_6"/>
    <property type="match status" value="1"/>
</dbReference>
<dbReference type="FunFam" id="1.20.120.220:FF:000008">
    <property type="entry name" value="ATP synthase subunit a"/>
    <property type="match status" value="1"/>
</dbReference>
<dbReference type="Gene3D" id="1.20.120.220">
    <property type="entry name" value="ATP synthase, F0 complex, subunit A"/>
    <property type="match status" value="1"/>
</dbReference>
<dbReference type="InterPro" id="IPR000568">
    <property type="entry name" value="ATP_synth_F0_asu"/>
</dbReference>
<dbReference type="InterPro" id="IPR023011">
    <property type="entry name" value="ATP_synth_F0_asu_AS"/>
</dbReference>
<dbReference type="InterPro" id="IPR045083">
    <property type="entry name" value="ATP_synth_F0_asu_bact/mt"/>
</dbReference>
<dbReference type="InterPro" id="IPR035908">
    <property type="entry name" value="F0_ATP_A_sf"/>
</dbReference>
<dbReference type="NCBIfam" id="TIGR01131">
    <property type="entry name" value="ATP_synt_6_or_A"/>
    <property type="match status" value="1"/>
</dbReference>
<dbReference type="PANTHER" id="PTHR11410">
    <property type="entry name" value="ATP SYNTHASE SUBUNIT A"/>
    <property type="match status" value="1"/>
</dbReference>
<dbReference type="PANTHER" id="PTHR11410:SF0">
    <property type="entry name" value="ATP SYNTHASE SUBUNIT A"/>
    <property type="match status" value="1"/>
</dbReference>
<dbReference type="Pfam" id="PF00119">
    <property type="entry name" value="ATP-synt_A"/>
    <property type="match status" value="1"/>
</dbReference>
<dbReference type="PRINTS" id="PR00123">
    <property type="entry name" value="ATPASEA"/>
</dbReference>
<dbReference type="SUPFAM" id="SSF81336">
    <property type="entry name" value="F1F0 ATP synthase subunit A"/>
    <property type="match status" value="1"/>
</dbReference>
<dbReference type="PROSITE" id="PS00449">
    <property type="entry name" value="ATPASE_A"/>
    <property type="match status" value="1"/>
</dbReference>
<evidence type="ECO:0000255" key="1"/>
<evidence type="ECO:0000305" key="2"/>
<reference key="1">
    <citation type="journal article" date="1993" name="Genet. Res.">
        <title>Evolution of the mitochondrial ATPase 6 gene in Drosophila: unusually high level of polymorphism in D. melanogaster.</title>
        <authorList>
            <person name="Kaneko M."/>
            <person name="Satta Y."/>
            <person name="Matsuura E.T."/>
            <person name="Chigusa S.I."/>
        </authorList>
    </citation>
    <scope>NUCLEOTIDE SEQUENCE [GENOMIC DNA]</scope>
</reference>
<reference key="2">
    <citation type="journal article" date="2004" name="Mol. Biol. Evol.">
        <title>Sequential evolution of a symbiont inferred from the host: Wolbachia and Drosophila simulans.</title>
        <authorList>
            <person name="Ballard J.W.O."/>
        </authorList>
    </citation>
    <scope>NUCLEOTIDE SEQUENCE [GENOMIC DNA]</scope>
    <source>
        <strain>AU023</strain>
        <strain>KY007</strain>
        <strain>KY045</strain>
        <strain>KY201</strain>
        <strain>KY215</strain>
    </source>
</reference>
<reference key="3">
    <citation type="journal article" date="2000" name="J. Mol. Evol.">
        <title>Comparative genomics of mitochondrial DNA in Drosophila simulans.</title>
        <authorList>
            <person name="Ballard J.W."/>
        </authorList>
    </citation>
    <scope>NUCLEOTIDE SEQUENCE [LARGE SCALE GENOMIC DNA]</scope>
    <source>
        <strain>C167</strain>
        <strain>DSR</strain>
        <strain>DSW</strain>
        <strain>HW00</strain>
        <strain>HW09</strain>
        <strain>MD106</strain>
        <strain>MD111</strain>
        <strain>MD112</strain>
        <strain>MD199</strain>
        <strain>MD221</strain>
        <strain>MD225</strain>
        <strain>MDW86</strain>
        <strain>NC37</strain>
        <strain>NC48</strain>
        <strain>RU00</strain>
        <strain>RU01</strain>
        <strain>RU07</strain>
        <strain>RU259</strain>
        <strain>RU35</strain>
        <strain>Sc00</strain>
        <strain>TT00</strain>
        <strain>TT01</strain>
    </source>
</reference>
<accession>P50269</accession>
<accession>Q9MD63</accession>
<accession>Q9MGK7</accession>
<accession>Q9MGL1</accession>
<gene>
    <name type="primary">mt:ATPase6</name>
    <name type="synonym">ATP6</name>
    <name type="synonym">ATPase6</name>
</gene>